<accession>Q9HT07</accession>
<gene>
    <name evidence="1" type="primary">mnmE</name>
    <name evidence="1" type="synonym">trmE</name>
    <name type="ordered locus">PA5567</name>
</gene>
<dbReference type="EC" id="3.6.-.-" evidence="1"/>
<dbReference type="EMBL" id="AE004091">
    <property type="protein sequence ID" value="AAG08952.1"/>
    <property type="molecule type" value="Genomic_DNA"/>
</dbReference>
<dbReference type="PIR" id="F82950">
    <property type="entry name" value="F82950"/>
</dbReference>
<dbReference type="RefSeq" id="NP_254254.1">
    <property type="nucleotide sequence ID" value="NC_002516.2"/>
</dbReference>
<dbReference type="RefSeq" id="WP_003100248.1">
    <property type="nucleotide sequence ID" value="NZ_QZGE01000012.1"/>
</dbReference>
<dbReference type="SMR" id="Q9HT07"/>
<dbReference type="FunCoup" id="Q9HT07">
    <property type="interactions" value="714"/>
</dbReference>
<dbReference type="STRING" id="208964.PA5567"/>
<dbReference type="PaxDb" id="208964-PA5567"/>
<dbReference type="GeneID" id="878126"/>
<dbReference type="KEGG" id="pae:PA5567"/>
<dbReference type="PATRIC" id="fig|208964.12.peg.5833"/>
<dbReference type="PseudoCAP" id="PA5567"/>
<dbReference type="HOGENOM" id="CLU_019624_4_1_6"/>
<dbReference type="InParanoid" id="Q9HT07"/>
<dbReference type="OrthoDB" id="9805918at2"/>
<dbReference type="PhylomeDB" id="Q9HT07"/>
<dbReference type="BioCyc" id="PAER208964:G1FZ6-5694-MONOMER"/>
<dbReference type="Proteomes" id="UP000002438">
    <property type="component" value="Chromosome"/>
</dbReference>
<dbReference type="GO" id="GO:0005737">
    <property type="term" value="C:cytoplasm"/>
    <property type="evidence" value="ECO:0000318"/>
    <property type="project" value="GO_Central"/>
</dbReference>
<dbReference type="GO" id="GO:0005829">
    <property type="term" value="C:cytosol"/>
    <property type="evidence" value="ECO:0000318"/>
    <property type="project" value="GO_Central"/>
</dbReference>
<dbReference type="GO" id="GO:0005525">
    <property type="term" value="F:GTP binding"/>
    <property type="evidence" value="ECO:0007669"/>
    <property type="project" value="UniProtKB-UniRule"/>
</dbReference>
<dbReference type="GO" id="GO:0003924">
    <property type="term" value="F:GTPase activity"/>
    <property type="evidence" value="ECO:0007669"/>
    <property type="project" value="UniProtKB-UniRule"/>
</dbReference>
<dbReference type="GO" id="GO:0046872">
    <property type="term" value="F:metal ion binding"/>
    <property type="evidence" value="ECO:0007669"/>
    <property type="project" value="UniProtKB-KW"/>
</dbReference>
<dbReference type="GO" id="GO:0030488">
    <property type="term" value="P:tRNA methylation"/>
    <property type="evidence" value="ECO:0000318"/>
    <property type="project" value="GO_Central"/>
</dbReference>
<dbReference type="GO" id="GO:0002098">
    <property type="term" value="P:tRNA wobble uridine modification"/>
    <property type="evidence" value="ECO:0000318"/>
    <property type="project" value="GO_Central"/>
</dbReference>
<dbReference type="CDD" id="cd04164">
    <property type="entry name" value="trmE"/>
    <property type="match status" value="1"/>
</dbReference>
<dbReference type="CDD" id="cd14858">
    <property type="entry name" value="TrmE_N"/>
    <property type="match status" value="1"/>
</dbReference>
<dbReference type="FunFam" id="3.30.1360.120:FF:000001">
    <property type="entry name" value="tRNA modification GTPase MnmE"/>
    <property type="match status" value="1"/>
</dbReference>
<dbReference type="FunFam" id="3.40.50.300:FF:000249">
    <property type="entry name" value="tRNA modification GTPase MnmE"/>
    <property type="match status" value="1"/>
</dbReference>
<dbReference type="Gene3D" id="3.40.50.300">
    <property type="entry name" value="P-loop containing nucleotide triphosphate hydrolases"/>
    <property type="match status" value="1"/>
</dbReference>
<dbReference type="Gene3D" id="3.30.1360.120">
    <property type="entry name" value="Probable tRNA modification gtpase trme, domain 1"/>
    <property type="match status" value="1"/>
</dbReference>
<dbReference type="Gene3D" id="1.20.120.430">
    <property type="entry name" value="tRNA modification GTPase MnmE domain 2"/>
    <property type="match status" value="1"/>
</dbReference>
<dbReference type="HAMAP" id="MF_00379">
    <property type="entry name" value="GTPase_MnmE"/>
    <property type="match status" value="1"/>
</dbReference>
<dbReference type="InterPro" id="IPR031168">
    <property type="entry name" value="G_TrmE"/>
</dbReference>
<dbReference type="InterPro" id="IPR006073">
    <property type="entry name" value="GTP-bd"/>
</dbReference>
<dbReference type="InterPro" id="IPR018948">
    <property type="entry name" value="GTP-bd_TrmE_N"/>
</dbReference>
<dbReference type="InterPro" id="IPR004520">
    <property type="entry name" value="GTPase_MnmE"/>
</dbReference>
<dbReference type="InterPro" id="IPR027368">
    <property type="entry name" value="MnmE_dom2"/>
</dbReference>
<dbReference type="InterPro" id="IPR025867">
    <property type="entry name" value="MnmE_helical"/>
</dbReference>
<dbReference type="InterPro" id="IPR027417">
    <property type="entry name" value="P-loop_NTPase"/>
</dbReference>
<dbReference type="InterPro" id="IPR005225">
    <property type="entry name" value="Small_GTP-bd"/>
</dbReference>
<dbReference type="InterPro" id="IPR027266">
    <property type="entry name" value="TrmE/GcvT_dom1"/>
</dbReference>
<dbReference type="NCBIfam" id="TIGR00450">
    <property type="entry name" value="mnmE_trmE_thdF"/>
    <property type="match status" value="1"/>
</dbReference>
<dbReference type="NCBIfam" id="NF003661">
    <property type="entry name" value="PRK05291.1-3"/>
    <property type="match status" value="1"/>
</dbReference>
<dbReference type="NCBIfam" id="TIGR00231">
    <property type="entry name" value="small_GTP"/>
    <property type="match status" value="1"/>
</dbReference>
<dbReference type="PANTHER" id="PTHR42714">
    <property type="entry name" value="TRNA MODIFICATION GTPASE GTPBP3"/>
    <property type="match status" value="1"/>
</dbReference>
<dbReference type="PANTHER" id="PTHR42714:SF2">
    <property type="entry name" value="TRNA MODIFICATION GTPASE GTPBP3, MITOCHONDRIAL"/>
    <property type="match status" value="1"/>
</dbReference>
<dbReference type="Pfam" id="PF01926">
    <property type="entry name" value="MMR_HSR1"/>
    <property type="match status" value="1"/>
</dbReference>
<dbReference type="Pfam" id="PF12631">
    <property type="entry name" value="MnmE_helical"/>
    <property type="match status" value="1"/>
</dbReference>
<dbReference type="Pfam" id="PF10396">
    <property type="entry name" value="TrmE_N"/>
    <property type="match status" value="1"/>
</dbReference>
<dbReference type="PRINTS" id="PR00326">
    <property type="entry name" value="GTP1OBG"/>
</dbReference>
<dbReference type="SUPFAM" id="SSF52540">
    <property type="entry name" value="P-loop containing nucleoside triphosphate hydrolases"/>
    <property type="match status" value="1"/>
</dbReference>
<dbReference type="SUPFAM" id="SSF116878">
    <property type="entry name" value="TrmE connector domain"/>
    <property type="match status" value="1"/>
</dbReference>
<dbReference type="PROSITE" id="PS51709">
    <property type="entry name" value="G_TRME"/>
    <property type="match status" value="1"/>
</dbReference>
<comment type="function">
    <text evidence="1">Exhibits a very high intrinsic GTPase hydrolysis rate. Involved in the addition of a carboxymethylaminomethyl (cmnm) group at the wobble position (U34) of certain tRNAs, forming tRNA-cmnm(5)s(2)U34.</text>
</comment>
<comment type="cofactor">
    <cofactor evidence="1">
        <name>K(+)</name>
        <dbReference type="ChEBI" id="CHEBI:29103"/>
    </cofactor>
    <text evidence="1">Binds 1 potassium ion per subunit.</text>
</comment>
<comment type="subunit">
    <text evidence="1">Homodimer. Heterotetramer of two MnmE and two MnmG subunits.</text>
</comment>
<comment type="subcellular location">
    <subcellularLocation>
        <location evidence="1">Cytoplasm</location>
    </subcellularLocation>
</comment>
<comment type="similarity">
    <text evidence="1">Belongs to the TRAFAC class TrmE-Era-EngA-EngB-Septin-like GTPase superfamily. TrmE GTPase family.</text>
</comment>
<keyword id="KW-0963">Cytoplasm</keyword>
<keyword id="KW-0342">GTP-binding</keyword>
<keyword id="KW-0378">Hydrolase</keyword>
<keyword id="KW-0460">Magnesium</keyword>
<keyword id="KW-0479">Metal-binding</keyword>
<keyword id="KW-0547">Nucleotide-binding</keyword>
<keyword id="KW-0630">Potassium</keyword>
<keyword id="KW-1185">Reference proteome</keyword>
<keyword id="KW-0819">tRNA processing</keyword>
<reference key="1">
    <citation type="journal article" date="2000" name="Nature">
        <title>Complete genome sequence of Pseudomonas aeruginosa PAO1, an opportunistic pathogen.</title>
        <authorList>
            <person name="Stover C.K."/>
            <person name="Pham X.-Q.T."/>
            <person name="Erwin A.L."/>
            <person name="Mizoguchi S.D."/>
            <person name="Warrener P."/>
            <person name="Hickey M.J."/>
            <person name="Brinkman F.S.L."/>
            <person name="Hufnagle W.O."/>
            <person name="Kowalik D.J."/>
            <person name="Lagrou M."/>
            <person name="Garber R.L."/>
            <person name="Goltry L."/>
            <person name="Tolentino E."/>
            <person name="Westbrock-Wadman S."/>
            <person name="Yuan Y."/>
            <person name="Brody L.L."/>
            <person name="Coulter S.N."/>
            <person name="Folger K.R."/>
            <person name="Kas A."/>
            <person name="Larbig K."/>
            <person name="Lim R.M."/>
            <person name="Smith K.A."/>
            <person name="Spencer D.H."/>
            <person name="Wong G.K.-S."/>
            <person name="Wu Z."/>
            <person name="Paulsen I.T."/>
            <person name="Reizer J."/>
            <person name="Saier M.H. Jr."/>
            <person name="Hancock R.E.W."/>
            <person name="Lory S."/>
            <person name="Olson M.V."/>
        </authorList>
    </citation>
    <scope>NUCLEOTIDE SEQUENCE [LARGE SCALE GENOMIC DNA]</scope>
    <source>
        <strain>ATCC 15692 / DSM 22644 / CIP 104116 / JCM 14847 / LMG 12228 / 1C / PRS 101 / PAO1</strain>
    </source>
</reference>
<name>MNME_PSEAE</name>
<proteinExistence type="inferred from homology"/>
<protein>
    <recommendedName>
        <fullName evidence="1">tRNA modification GTPase MnmE</fullName>
        <ecNumber evidence="1">3.6.-.-</ecNumber>
    </recommendedName>
</protein>
<feature type="chain" id="PRO_0000188904" description="tRNA modification GTPase MnmE">
    <location>
        <begin position="1"/>
        <end position="455"/>
    </location>
</feature>
<feature type="domain" description="TrmE-type G">
    <location>
        <begin position="216"/>
        <end position="378"/>
    </location>
</feature>
<feature type="binding site" evidence="1">
    <location>
        <position position="24"/>
    </location>
    <ligand>
        <name>(6S)-5-formyl-5,6,7,8-tetrahydrofolate</name>
        <dbReference type="ChEBI" id="CHEBI:57457"/>
    </ligand>
</feature>
<feature type="binding site" evidence="1">
    <location>
        <position position="81"/>
    </location>
    <ligand>
        <name>(6S)-5-formyl-5,6,7,8-tetrahydrofolate</name>
        <dbReference type="ChEBI" id="CHEBI:57457"/>
    </ligand>
</feature>
<feature type="binding site" evidence="1">
    <location>
        <position position="120"/>
    </location>
    <ligand>
        <name>(6S)-5-formyl-5,6,7,8-tetrahydrofolate</name>
        <dbReference type="ChEBI" id="CHEBI:57457"/>
    </ligand>
</feature>
<feature type="binding site" evidence="1">
    <location>
        <begin position="226"/>
        <end position="231"/>
    </location>
    <ligand>
        <name>GTP</name>
        <dbReference type="ChEBI" id="CHEBI:37565"/>
    </ligand>
</feature>
<feature type="binding site" evidence="1">
    <location>
        <position position="226"/>
    </location>
    <ligand>
        <name>K(+)</name>
        <dbReference type="ChEBI" id="CHEBI:29103"/>
    </ligand>
</feature>
<feature type="binding site" evidence="1">
    <location>
        <position position="230"/>
    </location>
    <ligand>
        <name>Mg(2+)</name>
        <dbReference type="ChEBI" id="CHEBI:18420"/>
    </ligand>
</feature>
<feature type="binding site" evidence="1">
    <location>
        <begin position="245"/>
        <end position="251"/>
    </location>
    <ligand>
        <name>GTP</name>
        <dbReference type="ChEBI" id="CHEBI:37565"/>
    </ligand>
</feature>
<feature type="binding site" evidence="1">
    <location>
        <position position="245"/>
    </location>
    <ligand>
        <name>K(+)</name>
        <dbReference type="ChEBI" id="CHEBI:29103"/>
    </ligand>
</feature>
<feature type="binding site" evidence="1">
    <location>
        <position position="247"/>
    </location>
    <ligand>
        <name>K(+)</name>
        <dbReference type="ChEBI" id="CHEBI:29103"/>
    </ligand>
</feature>
<feature type="binding site" evidence="1">
    <location>
        <position position="250"/>
    </location>
    <ligand>
        <name>K(+)</name>
        <dbReference type="ChEBI" id="CHEBI:29103"/>
    </ligand>
</feature>
<feature type="binding site" evidence="1">
    <location>
        <position position="251"/>
    </location>
    <ligand>
        <name>Mg(2+)</name>
        <dbReference type="ChEBI" id="CHEBI:18420"/>
    </ligand>
</feature>
<feature type="binding site" evidence="1">
    <location>
        <begin position="270"/>
        <end position="273"/>
    </location>
    <ligand>
        <name>GTP</name>
        <dbReference type="ChEBI" id="CHEBI:37565"/>
    </ligand>
</feature>
<feature type="binding site" evidence="1">
    <location>
        <begin position="335"/>
        <end position="338"/>
    </location>
    <ligand>
        <name>GTP</name>
        <dbReference type="ChEBI" id="CHEBI:37565"/>
    </ligand>
</feature>
<feature type="binding site" evidence="1">
    <location>
        <begin position="359"/>
        <end position="361"/>
    </location>
    <ligand>
        <name>GTP</name>
        <dbReference type="ChEBI" id="CHEBI:37565"/>
    </ligand>
</feature>
<feature type="binding site" evidence="1">
    <location>
        <position position="455"/>
    </location>
    <ligand>
        <name>(6S)-5-formyl-5,6,7,8-tetrahydrofolate</name>
        <dbReference type="ChEBI" id="CHEBI:57457"/>
    </ligand>
</feature>
<organism>
    <name type="scientific">Pseudomonas aeruginosa (strain ATCC 15692 / DSM 22644 / CIP 104116 / JCM 14847 / LMG 12228 / 1C / PRS 101 / PAO1)</name>
    <dbReference type="NCBI Taxonomy" id="208964"/>
    <lineage>
        <taxon>Bacteria</taxon>
        <taxon>Pseudomonadati</taxon>
        <taxon>Pseudomonadota</taxon>
        <taxon>Gammaproteobacteria</taxon>
        <taxon>Pseudomonadales</taxon>
        <taxon>Pseudomonadaceae</taxon>
        <taxon>Pseudomonas</taxon>
    </lineage>
</organism>
<evidence type="ECO:0000255" key="1">
    <source>
        <dbReference type="HAMAP-Rule" id="MF_00379"/>
    </source>
</evidence>
<sequence>MQAATETIVAIATAQGRGGVGIVRVSGPLAGQMAVAVSGRQLKARHAHYGPFLDAGGQVIDEGLSLYFPGPNSFTGEDVLELQGHGGPVVLDLLVQRCLELGARQARPGEFSERAFLNDKLDLAQAEAIADLIEASSEQAARNALRSLQGEFSRRVHALTEQLISLRIYVEAAIDFPEEEIDFLADGHVLGLLEKVRTELSTVQREASQGALLRDGMTVVIAGRPNAGKSSLLNALAGREAAIVTDIAGTTRDVLREHIHIDGMPLHVVDTAGLRDTEDHVEKIGVERALKAIGEADRVLLVVDATAPEAADPFSLWPEFLDQRPEPGKVTLIRNKADLSTESIGLEESADGHVTITLSARTGAGLELLREHLKACMGFEQTAESGFSARRRHLEALRLAGQALEHGHSQLIHNGAGELLAEDLRQAQQHLGEITGAFTPDDLLGRIFSSFCIGK</sequence>